<reference key="1">
    <citation type="journal article" date="2008" name="J. Bacteriol.">
        <title>The complete genome sequence of Actinobacillus pleuropneumoniae L20 (serotype 5b).</title>
        <authorList>
            <person name="Foote S.J."/>
            <person name="Bosse J.T."/>
            <person name="Bouevitch A.B."/>
            <person name="Langford P.R."/>
            <person name="Young N.M."/>
            <person name="Nash J.H.E."/>
        </authorList>
    </citation>
    <scope>NUCLEOTIDE SEQUENCE [LARGE SCALE GENOMIC DNA]</scope>
    <source>
        <strain>L20</strain>
    </source>
</reference>
<accession>A3MYZ9</accession>
<keyword id="KW-0963">Cytoplasm</keyword>
<keyword id="KW-0227">DNA damage</keyword>
<keyword id="KW-0228">DNA excision</keyword>
<keyword id="KW-0234">DNA repair</keyword>
<keyword id="KW-0267">Excision nuclease</keyword>
<keyword id="KW-1185">Reference proteome</keyword>
<keyword id="KW-0742">SOS response</keyword>
<name>UVRC_ACTP2</name>
<proteinExistence type="inferred from homology"/>
<feature type="chain" id="PRO_1000099453" description="UvrABC system protein C">
    <location>
        <begin position="1"/>
        <end position="610"/>
    </location>
</feature>
<feature type="domain" description="GIY-YIG" evidence="1">
    <location>
        <begin position="13"/>
        <end position="91"/>
    </location>
</feature>
<feature type="domain" description="UVR" evidence="1">
    <location>
        <begin position="201"/>
        <end position="236"/>
    </location>
</feature>
<gene>
    <name evidence="1" type="primary">uvrC</name>
    <name type="ordered locus">APL_0277</name>
</gene>
<evidence type="ECO:0000255" key="1">
    <source>
        <dbReference type="HAMAP-Rule" id="MF_00203"/>
    </source>
</evidence>
<organism>
    <name type="scientific">Actinobacillus pleuropneumoniae serotype 5b (strain L20)</name>
    <dbReference type="NCBI Taxonomy" id="416269"/>
    <lineage>
        <taxon>Bacteria</taxon>
        <taxon>Pseudomonadati</taxon>
        <taxon>Pseudomonadota</taxon>
        <taxon>Gammaproteobacteria</taxon>
        <taxon>Pasteurellales</taxon>
        <taxon>Pasteurellaceae</taxon>
        <taxon>Actinobacillus</taxon>
    </lineage>
</organism>
<comment type="function">
    <text evidence="1">The UvrABC repair system catalyzes the recognition and processing of DNA lesions. UvrC both incises the 5' and 3' sides of the lesion. The N-terminal half is responsible for the 3' incision and the C-terminal half is responsible for the 5' incision.</text>
</comment>
<comment type="subunit">
    <text evidence="1">Interacts with UvrB in an incision complex.</text>
</comment>
<comment type="subcellular location">
    <subcellularLocation>
        <location evidence="1">Cytoplasm</location>
    </subcellularLocation>
</comment>
<comment type="similarity">
    <text evidence="1">Belongs to the UvrC family.</text>
</comment>
<dbReference type="EMBL" id="CP000569">
    <property type="protein sequence ID" value="ABN73385.1"/>
    <property type="molecule type" value="Genomic_DNA"/>
</dbReference>
<dbReference type="RefSeq" id="WP_009874684.1">
    <property type="nucleotide sequence ID" value="NC_009053.1"/>
</dbReference>
<dbReference type="SMR" id="A3MYZ9"/>
<dbReference type="STRING" id="416269.APL_0277"/>
<dbReference type="EnsemblBacteria" id="ABN73385">
    <property type="protein sequence ID" value="ABN73385"/>
    <property type="gene ID" value="APL_0277"/>
</dbReference>
<dbReference type="KEGG" id="apl:APL_0277"/>
<dbReference type="PATRIC" id="fig|416269.6.peg.283"/>
<dbReference type="eggNOG" id="COG0322">
    <property type="taxonomic scope" value="Bacteria"/>
</dbReference>
<dbReference type="HOGENOM" id="CLU_014841_3_2_6"/>
<dbReference type="Proteomes" id="UP000001432">
    <property type="component" value="Chromosome"/>
</dbReference>
<dbReference type="GO" id="GO:0005737">
    <property type="term" value="C:cytoplasm"/>
    <property type="evidence" value="ECO:0007669"/>
    <property type="project" value="UniProtKB-SubCell"/>
</dbReference>
<dbReference type="GO" id="GO:0009380">
    <property type="term" value="C:excinuclease repair complex"/>
    <property type="evidence" value="ECO:0007669"/>
    <property type="project" value="InterPro"/>
</dbReference>
<dbReference type="GO" id="GO:0003677">
    <property type="term" value="F:DNA binding"/>
    <property type="evidence" value="ECO:0007669"/>
    <property type="project" value="UniProtKB-UniRule"/>
</dbReference>
<dbReference type="GO" id="GO:0009381">
    <property type="term" value="F:excinuclease ABC activity"/>
    <property type="evidence" value="ECO:0007669"/>
    <property type="project" value="UniProtKB-UniRule"/>
</dbReference>
<dbReference type="GO" id="GO:0006289">
    <property type="term" value="P:nucleotide-excision repair"/>
    <property type="evidence" value="ECO:0007669"/>
    <property type="project" value="UniProtKB-UniRule"/>
</dbReference>
<dbReference type="GO" id="GO:0009432">
    <property type="term" value="P:SOS response"/>
    <property type="evidence" value="ECO:0007669"/>
    <property type="project" value="UniProtKB-UniRule"/>
</dbReference>
<dbReference type="CDD" id="cd10434">
    <property type="entry name" value="GIY-YIG_UvrC_Cho"/>
    <property type="match status" value="1"/>
</dbReference>
<dbReference type="FunFam" id="1.10.150.20:FF:000005">
    <property type="entry name" value="UvrABC system protein C"/>
    <property type="match status" value="1"/>
</dbReference>
<dbReference type="FunFam" id="3.30.420.340:FF:000001">
    <property type="entry name" value="UvrABC system protein C"/>
    <property type="match status" value="1"/>
</dbReference>
<dbReference type="FunFam" id="3.40.1440.10:FF:000001">
    <property type="entry name" value="UvrABC system protein C"/>
    <property type="match status" value="1"/>
</dbReference>
<dbReference type="FunFam" id="4.10.860.10:FF:000002">
    <property type="entry name" value="UvrABC system protein C"/>
    <property type="match status" value="1"/>
</dbReference>
<dbReference type="Gene3D" id="1.10.150.20">
    <property type="entry name" value="5' to 3' exonuclease, C-terminal subdomain"/>
    <property type="match status" value="1"/>
</dbReference>
<dbReference type="Gene3D" id="3.40.1440.10">
    <property type="entry name" value="GIY-YIG endonuclease"/>
    <property type="match status" value="1"/>
</dbReference>
<dbReference type="Gene3D" id="4.10.860.10">
    <property type="entry name" value="UVR domain"/>
    <property type="match status" value="1"/>
</dbReference>
<dbReference type="Gene3D" id="3.30.420.340">
    <property type="entry name" value="UvrC, RNAse H endonuclease domain"/>
    <property type="match status" value="1"/>
</dbReference>
<dbReference type="HAMAP" id="MF_00203">
    <property type="entry name" value="UvrC"/>
    <property type="match status" value="1"/>
</dbReference>
<dbReference type="InterPro" id="IPR000305">
    <property type="entry name" value="GIY-YIG_endonuc"/>
</dbReference>
<dbReference type="InterPro" id="IPR035901">
    <property type="entry name" value="GIY-YIG_endonuc_sf"/>
</dbReference>
<dbReference type="InterPro" id="IPR047296">
    <property type="entry name" value="GIY-YIG_UvrC_Cho"/>
</dbReference>
<dbReference type="InterPro" id="IPR000445">
    <property type="entry name" value="HhH_motif"/>
</dbReference>
<dbReference type="InterPro" id="IPR003583">
    <property type="entry name" value="Hlx-hairpin-Hlx_DNA-bd_motif"/>
</dbReference>
<dbReference type="InterPro" id="IPR010994">
    <property type="entry name" value="RuvA_2-like"/>
</dbReference>
<dbReference type="InterPro" id="IPR001943">
    <property type="entry name" value="UVR_dom"/>
</dbReference>
<dbReference type="InterPro" id="IPR036876">
    <property type="entry name" value="UVR_dom_sf"/>
</dbReference>
<dbReference type="InterPro" id="IPR050066">
    <property type="entry name" value="UvrABC_protein_C"/>
</dbReference>
<dbReference type="InterPro" id="IPR004791">
    <property type="entry name" value="UvrC"/>
</dbReference>
<dbReference type="InterPro" id="IPR001162">
    <property type="entry name" value="UvrC_RNase_H_dom"/>
</dbReference>
<dbReference type="InterPro" id="IPR038476">
    <property type="entry name" value="UvrC_RNase_H_dom_sf"/>
</dbReference>
<dbReference type="NCBIfam" id="NF001824">
    <property type="entry name" value="PRK00558.1-5"/>
    <property type="match status" value="1"/>
</dbReference>
<dbReference type="NCBIfam" id="TIGR00194">
    <property type="entry name" value="uvrC"/>
    <property type="match status" value="1"/>
</dbReference>
<dbReference type="PANTHER" id="PTHR30562:SF1">
    <property type="entry name" value="UVRABC SYSTEM PROTEIN C"/>
    <property type="match status" value="1"/>
</dbReference>
<dbReference type="PANTHER" id="PTHR30562">
    <property type="entry name" value="UVRC/OXIDOREDUCTASE"/>
    <property type="match status" value="1"/>
</dbReference>
<dbReference type="Pfam" id="PF01541">
    <property type="entry name" value="GIY-YIG"/>
    <property type="match status" value="1"/>
</dbReference>
<dbReference type="Pfam" id="PF00633">
    <property type="entry name" value="HHH"/>
    <property type="match status" value="1"/>
</dbReference>
<dbReference type="Pfam" id="PF02151">
    <property type="entry name" value="UVR"/>
    <property type="match status" value="1"/>
</dbReference>
<dbReference type="Pfam" id="PF22920">
    <property type="entry name" value="UvrC_RNaseH"/>
    <property type="match status" value="1"/>
</dbReference>
<dbReference type="Pfam" id="PF08459">
    <property type="entry name" value="UvrC_RNaseH_dom"/>
    <property type="match status" value="1"/>
</dbReference>
<dbReference type="SMART" id="SM00465">
    <property type="entry name" value="GIYc"/>
    <property type="match status" value="1"/>
</dbReference>
<dbReference type="SMART" id="SM00278">
    <property type="entry name" value="HhH1"/>
    <property type="match status" value="2"/>
</dbReference>
<dbReference type="SUPFAM" id="SSF46600">
    <property type="entry name" value="C-terminal UvrC-binding domain of UvrB"/>
    <property type="match status" value="1"/>
</dbReference>
<dbReference type="SUPFAM" id="SSF82771">
    <property type="entry name" value="GIY-YIG endonuclease"/>
    <property type="match status" value="1"/>
</dbReference>
<dbReference type="SUPFAM" id="SSF47781">
    <property type="entry name" value="RuvA domain 2-like"/>
    <property type="match status" value="1"/>
</dbReference>
<dbReference type="PROSITE" id="PS50164">
    <property type="entry name" value="GIY_YIG"/>
    <property type="match status" value="1"/>
</dbReference>
<dbReference type="PROSITE" id="PS50151">
    <property type="entry name" value="UVR"/>
    <property type="match status" value="1"/>
</dbReference>
<dbReference type="PROSITE" id="PS50165">
    <property type="entry name" value="UVRC"/>
    <property type="match status" value="1"/>
</dbReference>
<protein>
    <recommendedName>
        <fullName evidence="1">UvrABC system protein C</fullName>
        <shortName evidence="1">Protein UvrC</shortName>
    </recommendedName>
    <alternativeName>
        <fullName evidence="1">Excinuclease ABC subunit C</fullName>
    </alternativeName>
</protein>
<sequence length="610" mass="69101">MFDAKAFLADVPHLPGVYRMYDAKNTIIYVGKAKDLKKRLSSYFRSQLASKKTEALVANIHHIETTITHSETEALLLEHNYIKENQPKYNVLLRDDKSYPYILLTKHQHPRITSFRGSKKVAGEYFGPYPNAGAVRETLNLLQKLFPIRQCEDSYYKNRSRPCLQYQIGRCLAPCVEGYYSQAEYDNQVNLVRLFLQGKDGQVVEHLVQKMENAAQELDFEAAARFRDQIQSVRAVQEKQFVSNERLDDLDIISIAYQHGIACVHILFVRHGKVLGNRSYFPKVPNNTDLSELADTFVGQFYLQMNQHRTIPNQIIIDQSLSEVTALANVLSEQAGHKVSIADKNIRGDKSRYLALAKTNAEAALTLQLKQDTHIRQRYDSLKALLNLAEIKRMECFDISHTMGNQTVASCVVFDKNGPLKSDYRRFNIEGITGGDDYAAMEQALLKLYDRNLEEEKIPDIIFIDGGKGQLNRALETFTSLNVSWDKRKPLLVGVAKGVERKAGLETLLISKWDKEIHLPPDSPALHLIQHIRDESHNHAITGHRKKRQKAFTESGLESIAGVGAKRRQALLKYLGGMQGVKAATLEEIQSVPGISKQLAEVIFDTLQHS</sequence>